<protein>
    <recommendedName>
        <fullName evidence="1">Imidazole glycerol phosphate synthase subunit HisH</fullName>
        <ecNumber evidence="1">4.3.2.10</ecNumber>
    </recommendedName>
    <alternativeName>
        <fullName evidence="1">IGP synthase glutaminase subunit</fullName>
        <ecNumber evidence="1">3.5.1.2</ecNumber>
    </alternativeName>
    <alternativeName>
        <fullName evidence="1">IGP synthase subunit HisH</fullName>
    </alternativeName>
    <alternativeName>
        <fullName evidence="1">ImGP synthase subunit HisH</fullName>
        <shortName evidence="1">IGPS subunit HisH</shortName>
    </alternativeName>
</protein>
<evidence type="ECO:0000255" key="1">
    <source>
        <dbReference type="HAMAP-Rule" id="MF_00278"/>
    </source>
</evidence>
<dbReference type="EC" id="4.3.2.10" evidence="1"/>
<dbReference type="EC" id="3.5.1.2" evidence="1"/>
<dbReference type="EMBL" id="AE008922">
    <property type="protein sequence ID" value="AAM41101.1"/>
    <property type="molecule type" value="Genomic_DNA"/>
</dbReference>
<dbReference type="RefSeq" id="NP_637177.1">
    <property type="nucleotide sequence ID" value="NC_003902.1"/>
</dbReference>
<dbReference type="RefSeq" id="WP_011036982.1">
    <property type="nucleotide sequence ID" value="NC_003902.1"/>
</dbReference>
<dbReference type="SMR" id="Q8P9P1"/>
<dbReference type="STRING" id="190485.XCC1812"/>
<dbReference type="EnsemblBacteria" id="AAM41101">
    <property type="protein sequence ID" value="AAM41101"/>
    <property type="gene ID" value="XCC1812"/>
</dbReference>
<dbReference type="KEGG" id="xcc:XCC1812"/>
<dbReference type="PATRIC" id="fig|190485.4.peg.1932"/>
<dbReference type="eggNOG" id="COG0118">
    <property type="taxonomic scope" value="Bacteria"/>
</dbReference>
<dbReference type="HOGENOM" id="CLU_071837_0_0_6"/>
<dbReference type="OrthoDB" id="9807137at2"/>
<dbReference type="UniPathway" id="UPA00031">
    <property type="reaction ID" value="UER00010"/>
</dbReference>
<dbReference type="Proteomes" id="UP000001010">
    <property type="component" value="Chromosome"/>
</dbReference>
<dbReference type="GO" id="GO:0005737">
    <property type="term" value="C:cytoplasm"/>
    <property type="evidence" value="ECO:0007669"/>
    <property type="project" value="UniProtKB-SubCell"/>
</dbReference>
<dbReference type="GO" id="GO:0004359">
    <property type="term" value="F:glutaminase activity"/>
    <property type="evidence" value="ECO:0007669"/>
    <property type="project" value="UniProtKB-EC"/>
</dbReference>
<dbReference type="GO" id="GO:0000107">
    <property type="term" value="F:imidazoleglycerol-phosphate synthase activity"/>
    <property type="evidence" value="ECO:0000318"/>
    <property type="project" value="GO_Central"/>
</dbReference>
<dbReference type="GO" id="GO:0016829">
    <property type="term" value="F:lyase activity"/>
    <property type="evidence" value="ECO:0007669"/>
    <property type="project" value="UniProtKB-KW"/>
</dbReference>
<dbReference type="GO" id="GO:0000105">
    <property type="term" value="P:L-histidine biosynthetic process"/>
    <property type="evidence" value="ECO:0007669"/>
    <property type="project" value="UniProtKB-UniRule"/>
</dbReference>
<dbReference type="CDD" id="cd01748">
    <property type="entry name" value="GATase1_IGP_Synthase"/>
    <property type="match status" value="1"/>
</dbReference>
<dbReference type="FunFam" id="3.40.50.880:FF:000009">
    <property type="entry name" value="Imidazole glycerol phosphate synthase subunit HisH"/>
    <property type="match status" value="1"/>
</dbReference>
<dbReference type="Gene3D" id="3.40.50.880">
    <property type="match status" value="1"/>
</dbReference>
<dbReference type="HAMAP" id="MF_00278">
    <property type="entry name" value="HisH"/>
    <property type="match status" value="1"/>
</dbReference>
<dbReference type="InterPro" id="IPR029062">
    <property type="entry name" value="Class_I_gatase-like"/>
</dbReference>
<dbReference type="InterPro" id="IPR017926">
    <property type="entry name" value="GATASE"/>
</dbReference>
<dbReference type="InterPro" id="IPR010139">
    <property type="entry name" value="Imidazole-glycPsynth_HisH"/>
</dbReference>
<dbReference type="NCBIfam" id="TIGR01855">
    <property type="entry name" value="IMP_synth_hisH"/>
    <property type="match status" value="1"/>
</dbReference>
<dbReference type="PANTHER" id="PTHR42701">
    <property type="entry name" value="IMIDAZOLE GLYCEROL PHOSPHATE SYNTHASE SUBUNIT HISH"/>
    <property type="match status" value="1"/>
</dbReference>
<dbReference type="PANTHER" id="PTHR42701:SF1">
    <property type="entry name" value="IMIDAZOLE GLYCEROL PHOSPHATE SYNTHASE SUBUNIT HISH"/>
    <property type="match status" value="1"/>
</dbReference>
<dbReference type="Pfam" id="PF00117">
    <property type="entry name" value="GATase"/>
    <property type="match status" value="1"/>
</dbReference>
<dbReference type="PIRSF" id="PIRSF000495">
    <property type="entry name" value="Amidotransf_hisH"/>
    <property type="match status" value="1"/>
</dbReference>
<dbReference type="SUPFAM" id="SSF52317">
    <property type="entry name" value="Class I glutamine amidotransferase-like"/>
    <property type="match status" value="1"/>
</dbReference>
<dbReference type="PROSITE" id="PS51273">
    <property type="entry name" value="GATASE_TYPE_1"/>
    <property type="match status" value="1"/>
</dbReference>
<reference key="1">
    <citation type="journal article" date="2002" name="Nature">
        <title>Comparison of the genomes of two Xanthomonas pathogens with differing host specificities.</title>
        <authorList>
            <person name="da Silva A.C.R."/>
            <person name="Ferro J.A."/>
            <person name="Reinach F.C."/>
            <person name="Farah C.S."/>
            <person name="Furlan L.R."/>
            <person name="Quaggio R.B."/>
            <person name="Monteiro-Vitorello C.B."/>
            <person name="Van Sluys M.A."/>
            <person name="Almeida N.F. Jr."/>
            <person name="Alves L.M.C."/>
            <person name="do Amaral A.M."/>
            <person name="Bertolini M.C."/>
            <person name="Camargo L.E.A."/>
            <person name="Camarotte G."/>
            <person name="Cannavan F."/>
            <person name="Cardozo J."/>
            <person name="Chambergo F."/>
            <person name="Ciapina L.P."/>
            <person name="Cicarelli R.M.B."/>
            <person name="Coutinho L.L."/>
            <person name="Cursino-Santos J.R."/>
            <person name="El-Dorry H."/>
            <person name="Faria J.B."/>
            <person name="Ferreira A.J.S."/>
            <person name="Ferreira R.C.C."/>
            <person name="Ferro M.I.T."/>
            <person name="Formighieri E.F."/>
            <person name="Franco M.C."/>
            <person name="Greggio C.C."/>
            <person name="Gruber A."/>
            <person name="Katsuyama A.M."/>
            <person name="Kishi L.T."/>
            <person name="Leite R.P."/>
            <person name="Lemos E.G.M."/>
            <person name="Lemos M.V.F."/>
            <person name="Locali E.C."/>
            <person name="Machado M.A."/>
            <person name="Madeira A.M.B.N."/>
            <person name="Martinez-Rossi N.M."/>
            <person name="Martins E.C."/>
            <person name="Meidanis J."/>
            <person name="Menck C.F.M."/>
            <person name="Miyaki C.Y."/>
            <person name="Moon D.H."/>
            <person name="Moreira L.M."/>
            <person name="Novo M.T.M."/>
            <person name="Okura V.K."/>
            <person name="Oliveira M.C."/>
            <person name="Oliveira V.R."/>
            <person name="Pereira H.A."/>
            <person name="Rossi A."/>
            <person name="Sena J.A.D."/>
            <person name="Silva C."/>
            <person name="de Souza R.F."/>
            <person name="Spinola L.A.F."/>
            <person name="Takita M.A."/>
            <person name="Tamura R.E."/>
            <person name="Teixeira E.C."/>
            <person name="Tezza R.I.D."/>
            <person name="Trindade dos Santos M."/>
            <person name="Truffi D."/>
            <person name="Tsai S.M."/>
            <person name="White F.F."/>
            <person name="Setubal J.C."/>
            <person name="Kitajima J.P."/>
        </authorList>
    </citation>
    <scope>NUCLEOTIDE SEQUENCE [LARGE SCALE GENOMIC DNA]</scope>
    <source>
        <strain>ATCC 33913 / DSM 3586 / NCPPB 528 / LMG 568 / P 25</strain>
    </source>
</reference>
<feature type="chain" id="PRO_0000152449" description="Imidazole glycerol phosphate synthase subunit HisH">
    <location>
        <begin position="1"/>
        <end position="200"/>
    </location>
</feature>
<feature type="domain" description="Glutamine amidotransferase type-1" evidence="1">
    <location>
        <begin position="3"/>
        <end position="200"/>
    </location>
</feature>
<feature type="active site" description="Nucleophile" evidence="1">
    <location>
        <position position="78"/>
    </location>
</feature>
<feature type="active site" evidence="1">
    <location>
        <position position="179"/>
    </location>
</feature>
<feature type="active site" evidence="1">
    <location>
        <position position="181"/>
    </location>
</feature>
<sequence length="200" mass="21260">MTDLALIDAGGANLGSVRYALERLGVEARVVRDAQGLQGAERVILPGVGAAPEAMARLRAQGLIEPLQQLQVPLIGICLGMQLLFEHSEEGDVDCLGMLPGIVRHMTPALGIRVPHMGWNQLVPMRDSALLAGLPERASAYFVHGYAAPVTADTVAACDHGGLFTAVVQSGLRCGAQFHPERSADTGARILRNFLEMSFP</sequence>
<proteinExistence type="inferred from homology"/>
<organism>
    <name type="scientific">Xanthomonas campestris pv. campestris (strain ATCC 33913 / DSM 3586 / NCPPB 528 / LMG 568 / P 25)</name>
    <dbReference type="NCBI Taxonomy" id="190485"/>
    <lineage>
        <taxon>Bacteria</taxon>
        <taxon>Pseudomonadati</taxon>
        <taxon>Pseudomonadota</taxon>
        <taxon>Gammaproteobacteria</taxon>
        <taxon>Lysobacterales</taxon>
        <taxon>Lysobacteraceae</taxon>
        <taxon>Xanthomonas</taxon>
    </lineage>
</organism>
<keyword id="KW-0028">Amino-acid biosynthesis</keyword>
<keyword id="KW-0963">Cytoplasm</keyword>
<keyword id="KW-0315">Glutamine amidotransferase</keyword>
<keyword id="KW-0368">Histidine biosynthesis</keyword>
<keyword id="KW-0378">Hydrolase</keyword>
<keyword id="KW-0456">Lyase</keyword>
<keyword id="KW-1185">Reference proteome</keyword>
<gene>
    <name evidence="1" type="primary">hisH</name>
    <name type="ordered locus">XCC1812</name>
</gene>
<accession>Q8P9P1</accession>
<comment type="function">
    <text evidence="1">IGPS catalyzes the conversion of PRFAR and glutamine to IGP, AICAR and glutamate. The HisH subunit catalyzes the hydrolysis of glutamine to glutamate and ammonia as part of the synthesis of IGP and AICAR. The resulting ammonia molecule is channeled to the active site of HisF.</text>
</comment>
<comment type="catalytic activity">
    <reaction evidence="1">
        <text>5-[(5-phospho-1-deoxy-D-ribulos-1-ylimino)methylamino]-1-(5-phospho-beta-D-ribosyl)imidazole-4-carboxamide + L-glutamine = D-erythro-1-(imidazol-4-yl)glycerol 3-phosphate + 5-amino-1-(5-phospho-beta-D-ribosyl)imidazole-4-carboxamide + L-glutamate + H(+)</text>
        <dbReference type="Rhea" id="RHEA:24793"/>
        <dbReference type="ChEBI" id="CHEBI:15378"/>
        <dbReference type="ChEBI" id="CHEBI:29985"/>
        <dbReference type="ChEBI" id="CHEBI:58278"/>
        <dbReference type="ChEBI" id="CHEBI:58359"/>
        <dbReference type="ChEBI" id="CHEBI:58475"/>
        <dbReference type="ChEBI" id="CHEBI:58525"/>
        <dbReference type="EC" id="4.3.2.10"/>
    </reaction>
</comment>
<comment type="catalytic activity">
    <reaction evidence="1">
        <text>L-glutamine + H2O = L-glutamate + NH4(+)</text>
        <dbReference type="Rhea" id="RHEA:15889"/>
        <dbReference type="ChEBI" id="CHEBI:15377"/>
        <dbReference type="ChEBI" id="CHEBI:28938"/>
        <dbReference type="ChEBI" id="CHEBI:29985"/>
        <dbReference type="ChEBI" id="CHEBI:58359"/>
        <dbReference type="EC" id="3.5.1.2"/>
    </reaction>
</comment>
<comment type="pathway">
    <text evidence="1">Amino-acid biosynthesis; L-histidine biosynthesis; L-histidine from 5-phospho-alpha-D-ribose 1-diphosphate: step 5/9.</text>
</comment>
<comment type="subunit">
    <text evidence="1">Heterodimer of HisH and HisF.</text>
</comment>
<comment type="subcellular location">
    <subcellularLocation>
        <location evidence="1">Cytoplasm</location>
    </subcellularLocation>
</comment>
<name>HIS5_XANCP</name>